<keyword id="KW-0686">Riboflavin biosynthesis</keyword>
<keyword id="KW-0808">Transferase</keyword>
<proteinExistence type="inferred from homology"/>
<sequence length="162" mass="16661">MNVYEGSLVGTGLKAALVVARFNSLVTEQLLVGAADALRRHGVADGDVDVFRCPGTFELPAVLRRVVATGRYDAVVALGAVIRGGTPHFEYVSAEVTKGVAHVAMEAGCAVTMGVLTCDSMEQALERAGVKAGNKGADAAAAAVEQANVLRAIARAPARKAE</sequence>
<evidence type="ECO:0000255" key="1">
    <source>
        <dbReference type="HAMAP-Rule" id="MF_00178"/>
    </source>
</evidence>
<feature type="chain" id="PRO_1000195452" description="6,7-dimethyl-8-ribityllumazine synthase">
    <location>
        <begin position="1"/>
        <end position="162"/>
    </location>
</feature>
<feature type="active site" description="Proton donor" evidence="1">
    <location>
        <position position="88"/>
    </location>
</feature>
<feature type="binding site" evidence="1">
    <location>
        <position position="22"/>
    </location>
    <ligand>
        <name>5-amino-6-(D-ribitylamino)uracil</name>
        <dbReference type="ChEBI" id="CHEBI:15934"/>
    </ligand>
</feature>
<feature type="binding site" evidence="1">
    <location>
        <begin position="56"/>
        <end position="58"/>
    </location>
    <ligand>
        <name>5-amino-6-(D-ribitylamino)uracil</name>
        <dbReference type="ChEBI" id="CHEBI:15934"/>
    </ligand>
</feature>
<feature type="binding site" evidence="1">
    <location>
        <begin position="80"/>
        <end position="82"/>
    </location>
    <ligand>
        <name>5-amino-6-(D-ribitylamino)uracil</name>
        <dbReference type="ChEBI" id="CHEBI:15934"/>
    </ligand>
</feature>
<feature type="binding site" evidence="1">
    <location>
        <begin position="85"/>
        <end position="86"/>
    </location>
    <ligand>
        <name>(2S)-2-hydroxy-3-oxobutyl phosphate</name>
        <dbReference type="ChEBI" id="CHEBI:58830"/>
    </ligand>
</feature>
<feature type="binding site" evidence="1">
    <location>
        <position position="113"/>
    </location>
    <ligand>
        <name>5-amino-6-(D-ribitylamino)uracil</name>
        <dbReference type="ChEBI" id="CHEBI:15934"/>
    </ligand>
</feature>
<feature type="binding site" evidence="1">
    <location>
        <position position="127"/>
    </location>
    <ligand>
        <name>(2S)-2-hydroxy-3-oxobutyl phosphate</name>
        <dbReference type="ChEBI" id="CHEBI:58830"/>
    </ligand>
</feature>
<protein>
    <recommendedName>
        <fullName evidence="1">6,7-dimethyl-8-ribityllumazine synthase</fullName>
        <shortName evidence="1">DMRL synthase</shortName>
        <shortName evidence="1">LS</shortName>
        <shortName evidence="1">Lumazine synthase</shortName>
        <ecNumber evidence="1">2.5.1.78</ecNumber>
    </recommendedName>
</protein>
<organism>
    <name type="scientific">Anaeromyxobacter dehalogenans (strain 2CP-1 / ATCC BAA-258)</name>
    <dbReference type="NCBI Taxonomy" id="455488"/>
    <lineage>
        <taxon>Bacteria</taxon>
        <taxon>Pseudomonadati</taxon>
        <taxon>Myxococcota</taxon>
        <taxon>Myxococcia</taxon>
        <taxon>Myxococcales</taxon>
        <taxon>Cystobacterineae</taxon>
        <taxon>Anaeromyxobacteraceae</taxon>
        <taxon>Anaeromyxobacter</taxon>
    </lineage>
</organism>
<name>RISB_ANAD2</name>
<gene>
    <name evidence="1" type="primary">ribH</name>
    <name type="ordered locus">A2cp1_2923</name>
</gene>
<comment type="function">
    <text evidence="1">Catalyzes the formation of 6,7-dimethyl-8-ribityllumazine by condensation of 5-amino-6-(D-ribitylamino)uracil with 3,4-dihydroxy-2-butanone 4-phosphate. This is the penultimate step in the biosynthesis of riboflavin.</text>
</comment>
<comment type="catalytic activity">
    <reaction evidence="1">
        <text>(2S)-2-hydroxy-3-oxobutyl phosphate + 5-amino-6-(D-ribitylamino)uracil = 6,7-dimethyl-8-(1-D-ribityl)lumazine + phosphate + 2 H2O + H(+)</text>
        <dbReference type="Rhea" id="RHEA:26152"/>
        <dbReference type="ChEBI" id="CHEBI:15377"/>
        <dbReference type="ChEBI" id="CHEBI:15378"/>
        <dbReference type="ChEBI" id="CHEBI:15934"/>
        <dbReference type="ChEBI" id="CHEBI:43474"/>
        <dbReference type="ChEBI" id="CHEBI:58201"/>
        <dbReference type="ChEBI" id="CHEBI:58830"/>
        <dbReference type="EC" id="2.5.1.78"/>
    </reaction>
</comment>
<comment type="pathway">
    <text evidence="1">Cofactor biosynthesis; riboflavin biosynthesis; riboflavin from 2-hydroxy-3-oxobutyl phosphate and 5-amino-6-(D-ribitylamino)uracil: step 1/2.</text>
</comment>
<comment type="similarity">
    <text evidence="1">Belongs to the DMRL synthase family.</text>
</comment>
<reference key="1">
    <citation type="submission" date="2009-01" db="EMBL/GenBank/DDBJ databases">
        <title>Complete sequence of Anaeromyxobacter dehalogenans 2CP-1.</title>
        <authorList>
            <person name="Lucas S."/>
            <person name="Copeland A."/>
            <person name="Lapidus A."/>
            <person name="Glavina del Rio T."/>
            <person name="Dalin E."/>
            <person name="Tice H."/>
            <person name="Bruce D."/>
            <person name="Goodwin L."/>
            <person name="Pitluck S."/>
            <person name="Saunders E."/>
            <person name="Brettin T."/>
            <person name="Detter J.C."/>
            <person name="Han C."/>
            <person name="Larimer F."/>
            <person name="Land M."/>
            <person name="Hauser L."/>
            <person name="Kyrpides N."/>
            <person name="Ovchinnikova G."/>
            <person name="Beliaev A.S."/>
            <person name="Richardson P."/>
        </authorList>
    </citation>
    <scope>NUCLEOTIDE SEQUENCE [LARGE SCALE GENOMIC DNA]</scope>
    <source>
        <strain>2CP-1 / ATCC BAA-258</strain>
    </source>
</reference>
<accession>B8JEW4</accession>
<dbReference type="EC" id="2.5.1.78" evidence="1"/>
<dbReference type="EMBL" id="CP001359">
    <property type="protein sequence ID" value="ACL66260.1"/>
    <property type="molecule type" value="Genomic_DNA"/>
</dbReference>
<dbReference type="SMR" id="B8JEW4"/>
<dbReference type="KEGG" id="acp:A2cp1_2923"/>
<dbReference type="HOGENOM" id="CLU_089358_1_1_7"/>
<dbReference type="UniPathway" id="UPA00275">
    <property type="reaction ID" value="UER00404"/>
</dbReference>
<dbReference type="Proteomes" id="UP000007089">
    <property type="component" value="Chromosome"/>
</dbReference>
<dbReference type="GO" id="GO:0005829">
    <property type="term" value="C:cytosol"/>
    <property type="evidence" value="ECO:0007669"/>
    <property type="project" value="TreeGrafter"/>
</dbReference>
<dbReference type="GO" id="GO:0009349">
    <property type="term" value="C:riboflavin synthase complex"/>
    <property type="evidence" value="ECO:0007669"/>
    <property type="project" value="InterPro"/>
</dbReference>
<dbReference type="GO" id="GO:0000906">
    <property type="term" value="F:6,7-dimethyl-8-ribityllumazine synthase activity"/>
    <property type="evidence" value="ECO:0007669"/>
    <property type="project" value="UniProtKB-UniRule"/>
</dbReference>
<dbReference type="GO" id="GO:0009231">
    <property type="term" value="P:riboflavin biosynthetic process"/>
    <property type="evidence" value="ECO:0007669"/>
    <property type="project" value="UniProtKB-UniRule"/>
</dbReference>
<dbReference type="CDD" id="cd09209">
    <property type="entry name" value="Lumazine_synthase-I"/>
    <property type="match status" value="1"/>
</dbReference>
<dbReference type="FunFam" id="3.40.50.960:FF:000001">
    <property type="entry name" value="6,7-dimethyl-8-ribityllumazine synthase"/>
    <property type="match status" value="1"/>
</dbReference>
<dbReference type="Gene3D" id="3.40.50.960">
    <property type="entry name" value="Lumazine/riboflavin synthase"/>
    <property type="match status" value="1"/>
</dbReference>
<dbReference type="HAMAP" id="MF_00178">
    <property type="entry name" value="Lumazine_synth"/>
    <property type="match status" value="1"/>
</dbReference>
<dbReference type="InterPro" id="IPR034964">
    <property type="entry name" value="LS"/>
</dbReference>
<dbReference type="InterPro" id="IPR002180">
    <property type="entry name" value="LS/RS"/>
</dbReference>
<dbReference type="InterPro" id="IPR036467">
    <property type="entry name" value="LS/RS_sf"/>
</dbReference>
<dbReference type="NCBIfam" id="TIGR00114">
    <property type="entry name" value="lumazine-synth"/>
    <property type="match status" value="1"/>
</dbReference>
<dbReference type="NCBIfam" id="NF000812">
    <property type="entry name" value="PRK00061.1-4"/>
    <property type="match status" value="1"/>
</dbReference>
<dbReference type="PANTHER" id="PTHR21058:SF0">
    <property type="entry name" value="6,7-DIMETHYL-8-RIBITYLLUMAZINE SYNTHASE"/>
    <property type="match status" value="1"/>
</dbReference>
<dbReference type="PANTHER" id="PTHR21058">
    <property type="entry name" value="6,7-DIMETHYL-8-RIBITYLLUMAZINE SYNTHASE DMRL SYNTHASE LUMAZINE SYNTHASE"/>
    <property type="match status" value="1"/>
</dbReference>
<dbReference type="Pfam" id="PF00885">
    <property type="entry name" value="DMRL_synthase"/>
    <property type="match status" value="1"/>
</dbReference>
<dbReference type="SUPFAM" id="SSF52121">
    <property type="entry name" value="Lumazine synthase"/>
    <property type="match status" value="1"/>
</dbReference>